<gene>
    <name evidence="1" type="primary">yidC</name>
    <name type="ordered locus">M446_5081</name>
</gene>
<keyword id="KW-0997">Cell inner membrane</keyword>
<keyword id="KW-1003">Cell membrane</keyword>
<keyword id="KW-0143">Chaperone</keyword>
<keyword id="KW-0472">Membrane</keyword>
<keyword id="KW-0653">Protein transport</keyword>
<keyword id="KW-0812">Transmembrane</keyword>
<keyword id="KW-1133">Transmembrane helix</keyword>
<keyword id="KW-0813">Transport</keyword>
<feature type="chain" id="PRO_1000187681" description="Membrane protein insertase YidC">
    <location>
        <begin position="1"/>
        <end position="624"/>
    </location>
</feature>
<feature type="transmembrane region" description="Helical" evidence="1">
    <location>
        <begin position="8"/>
        <end position="28"/>
    </location>
</feature>
<feature type="transmembrane region" description="Helical" evidence="1">
    <location>
        <begin position="370"/>
        <end position="390"/>
    </location>
</feature>
<feature type="transmembrane region" description="Helical" evidence="1">
    <location>
        <begin position="396"/>
        <end position="416"/>
    </location>
</feature>
<feature type="transmembrane region" description="Helical" evidence="1">
    <location>
        <begin position="470"/>
        <end position="490"/>
    </location>
</feature>
<feature type="transmembrane region" description="Helical" evidence="1">
    <location>
        <begin position="526"/>
        <end position="542"/>
    </location>
</feature>
<feature type="transmembrane region" description="Helical" evidence="1">
    <location>
        <begin position="559"/>
        <end position="579"/>
    </location>
</feature>
<feature type="region of interest" description="Disordered" evidence="2">
    <location>
        <begin position="36"/>
        <end position="95"/>
    </location>
</feature>
<feature type="compositionally biased region" description="Polar residues" evidence="2">
    <location>
        <begin position="43"/>
        <end position="64"/>
    </location>
</feature>
<sequence length="624" mass="68649">MGNDKTNMIIAIALSLAVLLGWNYFVTAPQVERQRQQQAAQVNPSQGVNPSQGVDPSQGVNASPSPKEGGPSAPVPGTLPGAAGGSPQAALARDEALARAPRVRIDTEALRGSVALKGGRIDDVALKGYHETVDPKSPEIVLLSPAGSANPYYAEFGWVGQNAGPLPGSDTVWTADGDVLTAKKPLVLTFDNGAGLVFRRTLSVDDKYMFTIEDSVENKGPNPVTLYPYGLVSRWGKPHTQGYYVLHEGMIGVVGDKGLQEYTYDKMAKENPLGAPGTRGVSWPGATGGFLGITDKYWAAATIPDQQAPYTGSFTERDEGATKVYQASSLGEARAVAPGASVQASQRLFAGAKEVSTVDAYREKLNIKQFDLLIDWGWFYFITKPMFKALDLFYKLFGNFGVSILVVTLILKLFFLPIANRSYVSMAKMKAVQPEMTAIRERYADDKVKQQQAMMELYKKEKINPVAGCWPVLIQIPVFFSLYKVLFVTIEMRHAPFFGWIRDLAAPDPTSIVNLFGLLPFTPPDLLHLGVWPIVMGITMFLQMKMNPAPPDPVQAQVFTFMPIIFTFMLGSFPAGLVIYWAWNNLLSILQQYWIMRRNGVKVELWDNLRSTFQRRTQVKTAKG</sequence>
<evidence type="ECO:0000255" key="1">
    <source>
        <dbReference type="HAMAP-Rule" id="MF_01810"/>
    </source>
</evidence>
<evidence type="ECO:0000256" key="2">
    <source>
        <dbReference type="SAM" id="MobiDB-lite"/>
    </source>
</evidence>
<name>YIDC_METS4</name>
<comment type="function">
    <text evidence="1">Required for the insertion and/or proper folding and/or complex formation of integral membrane proteins into the membrane. Involved in integration of membrane proteins that insert both dependently and independently of the Sec translocase complex, as well as at least some lipoproteins. Aids folding of multispanning membrane proteins.</text>
</comment>
<comment type="subunit">
    <text evidence="1">Interacts with the Sec translocase complex via SecD. Specifically interacts with transmembrane segments of nascent integral membrane proteins during membrane integration.</text>
</comment>
<comment type="subcellular location">
    <subcellularLocation>
        <location evidence="1">Cell inner membrane</location>
        <topology evidence="1">Multi-pass membrane protein</topology>
    </subcellularLocation>
</comment>
<comment type="similarity">
    <text evidence="1">Belongs to the OXA1/ALB3/YidC family. Type 1 subfamily.</text>
</comment>
<accession>B0UHI1</accession>
<reference key="1">
    <citation type="submission" date="2008-02" db="EMBL/GenBank/DDBJ databases">
        <title>Complete sequence of chromosome of Methylobacterium sp. 4-46.</title>
        <authorList>
            <consortium name="US DOE Joint Genome Institute"/>
            <person name="Copeland A."/>
            <person name="Lucas S."/>
            <person name="Lapidus A."/>
            <person name="Glavina del Rio T."/>
            <person name="Dalin E."/>
            <person name="Tice H."/>
            <person name="Bruce D."/>
            <person name="Goodwin L."/>
            <person name="Pitluck S."/>
            <person name="Chertkov O."/>
            <person name="Brettin T."/>
            <person name="Detter J.C."/>
            <person name="Han C."/>
            <person name="Kuske C.R."/>
            <person name="Schmutz J."/>
            <person name="Larimer F."/>
            <person name="Land M."/>
            <person name="Hauser L."/>
            <person name="Kyrpides N."/>
            <person name="Ivanova N."/>
            <person name="Marx C.J."/>
            <person name="Richardson P."/>
        </authorList>
    </citation>
    <scope>NUCLEOTIDE SEQUENCE [LARGE SCALE GENOMIC DNA]</scope>
    <source>
        <strain>4-46</strain>
    </source>
</reference>
<dbReference type="EMBL" id="CP000943">
    <property type="protein sequence ID" value="ACA19407.1"/>
    <property type="molecule type" value="Genomic_DNA"/>
</dbReference>
<dbReference type="RefSeq" id="WP_012334793.1">
    <property type="nucleotide sequence ID" value="NC_010511.1"/>
</dbReference>
<dbReference type="SMR" id="B0UHI1"/>
<dbReference type="STRING" id="426117.M446_5081"/>
<dbReference type="KEGG" id="met:M446_5081"/>
<dbReference type="eggNOG" id="COG0706">
    <property type="taxonomic scope" value="Bacteria"/>
</dbReference>
<dbReference type="HOGENOM" id="CLU_016535_1_0_5"/>
<dbReference type="GO" id="GO:0005886">
    <property type="term" value="C:plasma membrane"/>
    <property type="evidence" value="ECO:0007669"/>
    <property type="project" value="UniProtKB-SubCell"/>
</dbReference>
<dbReference type="GO" id="GO:0032977">
    <property type="term" value="F:membrane insertase activity"/>
    <property type="evidence" value="ECO:0007669"/>
    <property type="project" value="InterPro"/>
</dbReference>
<dbReference type="GO" id="GO:0051205">
    <property type="term" value="P:protein insertion into membrane"/>
    <property type="evidence" value="ECO:0007669"/>
    <property type="project" value="TreeGrafter"/>
</dbReference>
<dbReference type="GO" id="GO:0015031">
    <property type="term" value="P:protein transport"/>
    <property type="evidence" value="ECO:0007669"/>
    <property type="project" value="UniProtKB-KW"/>
</dbReference>
<dbReference type="CDD" id="cd20070">
    <property type="entry name" value="5TM_YidC_Alb3"/>
    <property type="match status" value="1"/>
</dbReference>
<dbReference type="CDD" id="cd19961">
    <property type="entry name" value="EcYidC-like_peri"/>
    <property type="match status" value="1"/>
</dbReference>
<dbReference type="Gene3D" id="2.70.98.90">
    <property type="match status" value="1"/>
</dbReference>
<dbReference type="HAMAP" id="MF_01810">
    <property type="entry name" value="YidC_type1"/>
    <property type="match status" value="1"/>
</dbReference>
<dbReference type="InterPro" id="IPR019998">
    <property type="entry name" value="Membr_insert_YidC"/>
</dbReference>
<dbReference type="InterPro" id="IPR028053">
    <property type="entry name" value="Membr_insert_YidC_N"/>
</dbReference>
<dbReference type="InterPro" id="IPR001708">
    <property type="entry name" value="YidC/ALB3/OXA1/COX18"/>
</dbReference>
<dbReference type="InterPro" id="IPR028055">
    <property type="entry name" value="YidC/Oxa/ALB_C"/>
</dbReference>
<dbReference type="InterPro" id="IPR047196">
    <property type="entry name" value="YidC_ALB_C"/>
</dbReference>
<dbReference type="InterPro" id="IPR038221">
    <property type="entry name" value="YidC_periplasmic_sf"/>
</dbReference>
<dbReference type="NCBIfam" id="NF002353">
    <property type="entry name" value="PRK01318.1-4"/>
    <property type="match status" value="1"/>
</dbReference>
<dbReference type="NCBIfam" id="TIGR03593">
    <property type="entry name" value="yidC_nterm"/>
    <property type="match status" value="1"/>
</dbReference>
<dbReference type="NCBIfam" id="TIGR03592">
    <property type="entry name" value="yidC_oxa1_cterm"/>
    <property type="match status" value="1"/>
</dbReference>
<dbReference type="PANTHER" id="PTHR12428:SF65">
    <property type="entry name" value="CYTOCHROME C OXIDASE ASSEMBLY PROTEIN COX18, MITOCHONDRIAL"/>
    <property type="match status" value="1"/>
</dbReference>
<dbReference type="PANTHER" id="PTHR12428">
    <property type="entry name" value="OXA1"/>
    <property type="match status" value="1"/>
</dbReference>
<dbReference type="Pfam" id="PF02096">
    <property type="entry name" value="60KD_IMP"/>
    <property type="match status" value="1"/>
</dbReference>
<dbReference type="Pfam" id="PF14849">
    <property type="entry name" value="YidC_periplas"/>
    <property type="match status" value="1"/>
</dbReference>
<dbReference type="PRINTS" id="PR00701">
    <property type="entry name" value="60KDINNERMP"/>
</dbReference>
<dbReference type="PRINTS" id="PR01900">
    <property type="entry name" value="YIDCPROTEIN"/>
</dbReference>
<protein>
    <recommendedName>
        <fullName evidence="1">Membrane protein insertase YidC</fullName>
    </recommendedName>
    <alternativeName>
        <fullName evidence="1">Foldase YidC</fullName>
    </alternativeName>
    <alternativeName>
        <fullName evidence="1">Membrane integrase YidC</fullName>
    </alternativeName>
    <alternativeName>
        <fullName evidence="1">Membrane protein YidC</fullName>
    </alternativeName>
</protein>
<organism>
    <name type="scientific">Methylobacterium sp. (strain 4-46)</name>
    <dbReference type="NCBI Taxonomy" id="426117"/>
    <lineage>
        <taxon>Bacteria</taxon>
        <taxon>Pseudomonadati</taxon>
        <taxon>Pseudomonadota</taxon>
        <taxon>Alphaproteobacteria</taxon>
        <taxon>Hyphomicrobiales</taxon>
        <taxon>Methylobacteriaceae</taxon>
        <taxon>Methylobacterium</taxon>
    </lineage>
</organism>
<proteinExistence type="inferred from homology"/>